<protein>
    <recommendedName>
        <fullName evidence="1">GTPase Era</fullName>
    </recommendedName>
</protein>
<keyword id="KW-1003">Cell membrane</keyword>
<keyword id="KW-0963">Cytoplasm</keyword>
<keyword id="KW-0342">GTP-binding</keyword>
<keyword id="KW-0472">Membrane</keyword>
<keyword id="KW-0547">Nucleotide-binding</keyword>
<keyword id="KW-0690">Ribosome biogenesis</keyword>
<keyword id="KW-0694">RNA-binding</keyword>
<keyword id="KW-0699">rRNA-binding</keyword>
<sequence>MFKSGFVAILGRPNVGKSTFLNHVMGQKIAIMSDKAQTTRNKIMGIYTTETEQIVFIDTPGIHKPKTALGDFMVESAYSTLREVETVLFMVPADEKRGKGDDMIIERLKAAKIPVILVINKIDKVHPDQLLEQIDDFRSQMDFKEVVPISALEGNNVPTLIKLLTDNLEEGFQYFPEDQITDHPERFLVSEMVREKVLHLTQQEVPHSVAVVVESMKRDEETDKVHIRATIMVERDSQKGIIIGKQGAMLKKIGKMARRDIELMLGDKVYLETWVKVKKNWRDKKLDLADFGYNEKEY</sequence>
<gene>
    <name evidence="1" type="primary">era</name>
    <name type="ordered locus">Spy49_0403</name>
</gene>
<dbReference type="EMBL" id="CP000829">
    <property type="protein sequence ID" value="ACI60736.1"/>
    <property type="molecule type" value="Genomic_DNA"/>
</dbReference>
<dbReference type="SMR" id="B5XK74"/>
<dbReference type="KEGG" id="soz:Spy49_0403"/>
<dbReference type="HOGENOM" id="CLU_038009_1_0_9"/>
<dbReference type="Proteomes" id="UP000001039">
    <property type="component" value="Chromosome"/>
</dbReference>
<dbReference type="GO" id="GO:0005829">
    <property type="term" value="C:cytosol"/>
    <property type="evidence" value="ECO:0007669"/>
    <property type="project" value="TreeGrafter"/>
</dbReference>
<dbReference type="GO" id="GO:0005886">
    <property type="term" value="C:plasma membrane"/>
    <property type="evidence" value="ECO:0007669"/>
    <property type="project" value="UniProtKB-SubCell"/>
</dbReference>
<dbReference type="GO" id="GO:0005525">
    <property type="term" value="F:GTP binding"/>
    <property type="evidence" value="ECO:0007669"/>
    <property type="project" value="UniProtKB-UniRule"/>
</dbReference>
<dbReference type="GO" id="GO:0003924">
    <property type="term" value="F:GTPase activity"/>
    <property type="evidence" value="ECO:0007669"/>
    <property type="project" value="UniProtKB-UniRule"/>
</dbReference>
<dbReference type="GO" id="GO:0043024">
    <property type="term" value="F:ribosomal small subunit binding"/>
    <property type="evidence" value="ECO:0007669"/>
    <property type="project" value="TreeGrafter"/>
</dbReference>
<dbReference type="GO" id="GO:0070181">
    <property type="term" value="F:small ribosomal subunit rRNA binding"/>
    <property type="evidence" value="ECO:0007669"/>
    <property type="project" value="UniProtKB-UniRule"/>
</dbReference>
<dbReference type="GO" id="GO:0000028">
    <property type="term" value="P:ribosomal small subunit assembly"/>
    <property type="evidence" value="ECO:0007669"/>
    <property type="project" value="TreeGrafter"/>
</dbReference>
<dbReference type="CDD" id="cd04163">
    <property type="entry name" value="Era"/>
    <property type="match status" value="1"/>
</dbReference>
<dbReference type="CDD" id="cd22534">
    <property type="entry name" value="KH-II_Era"/>
    <property type="match status" value="1"/>
</dbReference>
<dbReference type="FunFam" id="3.30.300.20:FF:000003">
    <property type="entry name" value="GTPase Era"/>
    <property type="match status" value="1"/>
</dbReference>
<dbReference type="FunFam" id="3.40.50.300:FF:000094">
    <property type="entry name" value="GTPase Era"/>
    <property type="match status" value="1"/>
</dbReference>
<dbReference type="Gene3D" id="3.30.300.20">
    <property type="match status" value="1"/>
</dbReference>
<dbReference type="Gene3D" id="3.40.50.300">
    <property type="entry name" value="P-loop containing nucleotide triphosphate hydrolases"/>
    <property type="match status" value="1"/>
</dbReference>
<dbReference type="HAMAP" id="MF_00367">
    <property type="entry name" value="GTPase_Era"/>
    <property type="match status" value="1"/>
</dbReference>
<dbReference type="InterPro" id="IPR030388">
    <property type="entry name" value="G_ERA_dom"/>
</dbReference>
<dbReference type="InterPro" id="IPR006073">
    <property type="entry name" value="GTP-bd"/>
</dbReference>
<dbReference type="InterPro" id="IPR005662">
    <property type="entry name" value="GTPase_Era-like"/>
</dbReference>
<dbReference type="InterPro" id="IPR015946">
    <property type="entry name" value="KH_dom-like_a/b"/>
</dbReference>
<dbReference type="InterPro" id="IPR004044">
    <property type="entry name" value="KH_dom_type_2"/>
</dbReference>
<dbReference type="InterPro" id="IPR009019">
    <property type="entry name" value="KH_sf_prok-type"/>
</dbReference>
<dbReference type="InterPro" id="IPR027417">
    <property type="entry name" value="P-loop_NTPase"/>
</dbReference>
<dbReference type="InterPro" id="IPR005225">
    <property type="entry name" value="Small_GTP-bd"/>
</dbReference>
<dbReference type="NCBIfam" id="TIGR00436">
    <property type="entry name" value="era"/>
    <property type="match status" value="1"/>
</dbReference>
<dbReference type="NCBIfam" id="NF000908">
    <property type="entry name" value="PRK00089.1"/>
    <property type="match status" value="1"/>
</dbReference>
<dbReference type="NCBIfam" id="TIGR00231">
    <property type="entry name" value="small_GTP"/>
    <property type="match status" value="1"/>
</dbReference>
<dbReference type="PANTHER" id="PTHR42698">
    <property type="entry name" value="GTPASE ERA"/>
    <property type="match status" value="1"/>
</dbReference>
<dbReference type="PANTHER" id="PTHR42698:SF1">
    <property type="entry name" value="GTPASE ERA, MITOCHONDRIAL"/>
    <property type="match status" value="1"/>
</dbReference>
<dbReference type="Pfam" id="PF07650">
    <property type="entry name" value="KH_2"/>
    <property type="match status" value="1"/>
</dbReference>
<dbReference type="Pfam" id="PF01926">
    <property type="entry name" value="MMR_HSR1"/>
    <property type="match status" value="1"/>
</dbReference>
<dbReference type="SUPFAM" id="SSF52540">
    <property type="entry name" value="P-loop containing nucleoside triphosphate hydrolases"/>
    <property type="match status" value="1"/>
</dbReference>
<dbReference type="SUPFAM" id="SSF54814">
    <property type="entry name" value="Prokaryotic type KH domain (KH-domain type II)"/>
    <property type="match status" value="1"/>
</dbReference>
<dbReference type="PROSITE" id="PS51713">
    <property type="entry name" value="G_ERA"/>
    <property type="match status" value="1"/>
</dbReference>
<dbReference type="PROSITE" id="PS50823">
    <property type="entry name" value="KH_TYPE_2"/>
    <property type="match status" value="1"/>
</dbReference>
<proteinExistence type="inferred from homology"/>
<organism>
    <name type="scientific">Streptococcus pyogenes serotype M49 (strain NZ131)</name>
    <dbReference type="NCBI Taxonomy" id="471876"/>
    <lineage>
        <taxon>Bacteria</taxon>
        <taxon>Bacillati</taxon>
        <taxon>Bacillota</taxon>
        <taxon>Bacilli</taxon>
        <taxon>Lactobacillales</taxon>
        <taxon>Streptococcaceae</taxon>
        <taxon>Streptococcus</taxon>
    </lineage>
</organism>
<comment type="function">
    <text evidence="1">An essential GTPase that binds both GDP and GTP, with rapid nucleotide exchange. Plays a role in 16S rRNA processing and 30S ribosomal subunit biogenesis and possibly also in cell cycle regulation and energy metabolism.</text>
</comment>
<comment type="subunit">
    <text evidence="1">Monomer.</text>
</comment>
<comment type="subcellular location">
    <subcellularLocation>
        <location>Cytoplasm</location>
    </subcellularLocation>
    <subcellularLocation>
        <location evidence="1">Cell membrane</location>
        <topology evidence="1">Peripheral membrane protein</topology>
    </subcellularLocation>
</comment>
<comment type="similarity">
    <text evidence="1 2">Belongs to the TRAFAC class TrmE-Era-EngA-EngB-Septin-like GTPase superfamily. Era GTPase family.</text>
</comment>
<name>ERA_STRPZ</name>
<accession>B5XK74</accession>
<feature type="chain" id="PRO_1000121362" description="GTPase Era">
    <location>
        <begin position="1"/>
        <end position="298"/>
    </location>
</feature>
<feature type="domain" description="Era-type G" evidence="2">
    <location>
        <begin position="3"/>
        <end position="170"/>
    </location>
</feature>
<feature type="domain" description="KH type-2" evidence="1">
    <location>
        <begin position="201"/>
        <end position="279"/>
    </location>
</feature>
<feature type="region of interest" description="G1" evidence="2">
    <location>
        <begin position="11"/>
        <end position="18"/>
    </location>
</feature>
<feature type="region of interest" description="G2" evidence="2">
    <location>
        <begin position="37"/>
        <end position="41"/>
    </location>
</feature>
<feature type="region of interest" description="G3" evidence="2">
    <location>
        <begin position="58"/>
        <end position="61"/>
    </location>
</feature>
<feature type="region of interest" description="G4" evidence="2">
    <location>
        <begin position="120"/>
        <end position="123"/>
    </location>
</feature>
<feature type="region of interest" description="G5" evidence="2">
    <location>
        <begin position="149"/>
        <end position="151"/>
    </location>
</feature>
<feature type="binding site" evidence="1">
    <location>
        <begin position="11"/>
        <end position="18"/>
    </location>
    <ligand>
        <name>GTP</name>
        <dbReference type="ChEBI" id="CHEBI:37565"/>
    </ligand>
</feature>
<feature type="binding site" evidence="1">
    <location>
        <begin position="58"/>
        <end position="62"/>
    </location>
    <ligand>
        <name>GTP</name>
        <dbReference type="ChEBI" id="CHEBI:37565"/>
    </ligand>
</feature>
<feature type="binding site" evidence="1">
    <location>
        <begin position="120"/>
        <end position="123"/>
    </location>
    <ligand>
        <name>GTP</name>
        <dbReference type="ChEBI" id="CHEBI:37565"/>
    </ligand>
</feature>
<reference key="1">
    <citation type="journal article" date="2008" name="J. Bacteriol.">
        <title>Genome sequence of a nephritogenic and highly transformable M49 strain of Streptococcus pyogenes.</title>
        <authorList>
            <person name="McShan W.M."/>
            <person name="Ferretti J.J."/>
            <person name="Karasawa T."/>
            <person name="Suvorov A.N."/>
            <person name="Lin S."/>
            <person name="Qin B."/>
            <person name="Jia H."/>
            <person name="Kenton S."/>
            <person name="Najar F."/>
            <person name="Wu H."/>
            <person name="Scott J."/>
            <person name="Roe B.A."/>
            <person name="Savic D.J."/>
        </authorList>
    </citation>
    <scope>NUCLEOTIDE SEQUENCE [LARGE SCALE GENOMIC DNA]</scope>
    <source>
        <strain>NZ131</strain>
    </source>
</reference>
<evidence type="ECO:0000255" key="1">
    <source>
        <dbReference type="HAMAP-Rule" id="MF_00367"/>
    </source>
</evidence>
<evidence type="ECO:0000255" key="2">
    <source>
        <dbReference type="PROSITE-ProRule" id="PRU01050"/>
    </source>
</evidence>